<name>RNPH_SHISS</name>
<evidence type="ECO:0000255" key="1">
    <source>
        <dbReference type="HAMAP-Rule" id="MF_00564"/>
    </source>
</evidence>
<dbReference type="EC" id="2.7.7.56" evidence="1"/>
<dbReference type="EMBL" id="CP000038">
    <property type="protein sequence ID" value="AAZ90307.1"/>
    <property type="molecule type" value="Genomic_DNA"/>
</dbReference>
<dbReference type="RefSeq" id="WP_001247093.1">
    <property type="nucleotide sequence ID" value="NC_007384.1"/>
</dbReference>
<dbReference type="SMR" id="Q3YW05"/>
<dbReference type="GeneID" id="93778358"/>
<dbReference type="KEGG" id="ssn:SSON_3763"/>
<dbReference type="HOGENOM" id="CLU_050858_0_0_6"/>
<dbReference type="Proteomes" id="UP000002529">
    <property type="component" value="Chromosome"/>
</dbReference>
<dbReference type="GO" id="GO:0000175">
    <property type="term" value="F:3'-5'-RNA exonuclease activity"/>
    <property type="evidence" value="ECO:0007669"/>
    <property type="project" value="UniProtKB-UniRule"/>
</dbReference>
<dbReference type="GO" id="GO:0000049">
    <property type="term" value="F:tRNA binding"/>
    <property type="evidence" value="ECO:0007669"/>
    <property type="project" value="UniProtKB-UniRule"/>
</dbReference>
<dbReference type="GO" id="GO:0009022">
    <property type="term" value="F:tRNA nucleotidyltransferase activity"/>
    <property type="evidence" value="ECO:0007669"/>
    <property type="project" value="UniProtKB-UniRule"/>
</dbReference>
<dbReference type="GO" id="GO:0016075">
    <property type="term" value="P:rRNA catabolic process"/>
    <property type="evidence" value="ECO:0007669"/>
    <property type="project" value="UniProtKB-UniRule"/>
</dbReference>
<dbReference type="GO" id="GO:0006364">
    <property type="term" value="P:rRNA processing"/>
    <property type="evidence" value="ECO:0007669"/>
    <property type="project" value="UniProtKB-KW"/>
</dbReference>
<dbReference type="GO" id="GO:0008033">
    <property type="term" value="P:tRNA processing"/>
    <property type="evidence" value="ECO:0007669"/>
    <property type="project" value="UniProtKB-UniRule"/>
</dbReference>
<dbReference type="CDD" id="cd11362">
    <property type="entry name" value="RNase_PH_bact"/>
    <property type="match status" value="1"/>
</dbReference>
<dbReference type="FunFam" id="3.30.230.70:FF:000003">
    <property type="entry name" value="Ribonuclease PH"/>
    <property type="match status" value="1"/>
</dbReference>
<dbReference type="Gene3D" id="3.30.230.70">
    <property type="entry name" value="GHMP Kinase, N-terminal domain"/>
    <property type="match status" value="1"/>
</dbReference>
<dbReference type="HAMAP" id="MF_00564">
    <property type="entry name" value="RNase_PH"/>
    <property type="match status" value="1"/>
</dbReference>
<dbReference type="InterPro" id="IPR001247">
    <property type="entry name" value="ExoRNase_PH_dom1"/>
</dbReference>
<dbReference type="InterPro" id="IPR015847">
    <property type="entry name" value="ExoRNase_PH_dom2"/>
</dbReference>
<dbReference type="InterPro" id="IPR036345">
    <property type="entry name" value="ExoRNase_PH_dom2_sf"/>
</dbReference>
<dbReference type="InterPro" id="IPR027408">
    <property type="entry name" value="PNPase/RNase_PH_dom_sf"/>
</dbReference>
<dbReference type="InterPro" id="IPR020568">
    <property type="entry name" value="Ribosomal_Su5_D2-typ_SF"/>
</dbReference>
<dbReference type="InterPro" id="IPR050080">
    <property type="entry name" value="RNase_PH"/>
</dbReference>
<dbReference type="InterPro" id="IPR002381">
    <property type="entry name" value="RNase_PH_bac-type"/>
</dbReference>
<dbReference type="InterPro" id="IPR018336">
    <property type="entry name" value="RNase_PH_CS"/>
</dbReference>
<dbReference type="NCBIfam" id="TIGR01966">
    <property type="entry name" value="RNasePH"/>
    <property type="match status" value="1"/>
</dbReference>
<dbReference type="PANTHER" id="PTHR11953">
    <property type="entry name" value="EXOSOME COMPLEX COMPONENT"/>
    <property type="match status" value="1"/>
</dbReference>
<dbReference type="PANTHER" id="PTHR11953:SF0">
    <property type="entry name" value="EXOSOME COMPLEX COMPONENT RRP41"/>
    <property type="match status" value="1"/>
</dbReference>
<dbReference type="Pfam" id="PF01138">
    <property type="entry name" value="RNase_PH"/>
    <property type="match status" value="1"/>
</dbReference>
<dbReference type="Pfam" id="PF03725">
    <property type="entry name" value="RNase_PH_C"/>
    <property type="match status" value="1"/>
</dbReference>
<dbReference type="SUPFAM" id="SSF55666">
    <property type="entry name" value="Ribonuclease PH domain 2-like"/>
    <property type="match status" value="1"/>
</dbReference>
<dbReference type="SUPFAM" id="SSF54211">
    <property type="entry name" value="Ribosomal protein S5 domain 2-like"/>
    <property type="match status" value="1"/>
</dbReference>
<dbReference type="PROSITE" id="PS01277">
    <property type="entry name" value="RIBONUCLEASE_PH"/>
    <property type="match status" value="1"/>
</dbReference>
<organism>
    <name type="scientific">Shigella sonnei (strain Ss046)</name>
    <dbReference type="NCBI Taxonomy" id="300269"/>
    <lineage>
        <taxon>Bacteria</taxon>
        <taxon>Pseudomonadati</taxon>
        <taxon>Pseudomonadota</taxon>
        <taxon>Gammaproteobacteria</taxon>
        <taxon>Enterobacterales</taxon>
        <taxon>Enterobacteriaceae</taxon>
        <taxon>Shigella</taxon>
    </lineage>
</organism>
<gene>
    <name evidence="1" type="primary">rph</name>
    <name type="ordered locus">SSON_3763</name>
</gene>
<reference key="1">
    <citation type="journal article" date="2005" name="Nucleic Acids Res.">
        <title>Genome dynamics and diversity of Shigella species, the etiologic agents of bacillary dysentery.</title>
        <authorList>
            <person name="Yang F."/>
            <person name="Yang J."/>
            <person name="Zhang X."/>
            <person name="Chen L."/>
            <person name="Jiang Y."/>
            <person name="Yan Y."/>
            <person name="Tang X."/>
            <person name="Wang J."/>
            <person name="Xiong Z."/>
            <person name="Dong J."/>
            <person name="Xue Y."/>
            <person name="Zhu Y."/>
            <person name="Xu X."/>
            <person name="Sun L."/>
            <person name="Chen S."/>
            <person name="Nie H."/>
            <person name="Peng J."/>
            <person name="Xu J."/>
            <person name="Wang Y."/>
            <person name="Yuan Z."/>
            <person name="Wen Y."/>
            <person name="Yao Z."/>
            <person name="Shen Y."/>
            <person name="Qiang B."/>
            <person name="Hou Y."/>
            <person name="Yu J."/>
            <person name="Jin Q."/>
        </authorList>
    </citation>
    <scope>NUCLEOTIDE SEQUENCE [LARGE SCALE GENOMIC DNA]</scope>
    <source>
        <strain>Ss046</strain>
    </source>
</reference>
<feature type="chain" id="PRO_1000024892" description="Ribonuclease PH">
    <location>
        <begin position="1"/>
        <end position="238"/>
    </location>
</feature>
<feature type="binding site" evidence="1">
    <location>
        <position position="86"/>
    </location>
    <ligand>
        <name>phosphate</name>
        <dbReference type="ChEBI" id="CHEBI:43474"/>
        <note>substrate</note>
    </ligand>
</feature>
<feature type="binding site" evidence="1">
    <location>
        <begin position="124"/>
        <end position="126"/>
    </location>
    <ligand>
        <name>phosphate</name>
        <dbReference type="ChEBI" id="CHEBI:43474"/>
        <note>substrate</note>
    </ligand>
</feature>
<protein>
    <recommendedName>
        <fullName evidence="1">Ribonuclease PH</fullName>
        <shortName evidence="1">RNase PH</shortName>
        <ecNumber evidence="1">2.7.7.56</ecNumber>
    </recommendedName>
    <alternativeName>
        <fullName evidence="1">tRNA nucleotidyltransferase</fullName>
    </alternativeName>
</protein>
<proteinExistence type="inferred from homology"/>
<comment type="function">
    <text evidence="1">Phosphorolytic 3'-5' exoribonuclease that plays an important role in tRNA 3'-end maturation. Removes nucleotide residues following the 3'-CCA terminus of tRNAs; can also add nucleotides to the ends of RNA molecules by using nucleoside diphosphates as substrates, but this may not be physiologically important. Probably plays a role in initiation of 16S rRNA degradation (leading to ribosome degradation) during starvation.</text>
</comment>
<comment type="catalytic activity">
    <reaction evidence="1">
        <text>tRNA(n+1) + phosphate = tRNA(n) + a ribonucleoside 5'-diphosphate</text>
        <dbReference type="Rhea" id="RHEA:10628"/>
        <dbReference type="Rhea" id="RHEA-COMP:17343"/>
        <dbReference type="Rhea" id="RHEA-COMP:17344"/>
        <dbReference type="ChEBI" id="CHEBI:43474"/>
        <dbReference type="ChEBI" id="CHEBI:57930"/>
        <dbReference type="ChEBI" id="CHEBI:173114"/>
        <dbReference type="EC" id="2.7.7.56"/>
    </reaction>
</comment>
<comment type="subunit">
    <text evidence="1">Homohexameric ring arranged as a trimer of dimers.</text>
</comment>
<comment type="similarity">
    <text evidence="1">Belongs to the RNase PH family.</text>
</comment>
<sequence>MRPAGRSNNQVRPVTLTRNYTKHAEGSVLVEFGDTKVLCTASIEEGVPRFLKGQGQGWITAEYGMLPRSTHTRNAREAAKGKQGGRTMEIQRLIARALRAAVDLKALGEFTITLDCDVLQADGGTRTASITGACVALADALQKLVENGKLKTNPMKGMVAAVSVGIVNGEAVCDLEYVEDSAAETDMNVVMTEDGRIIEVQGTAEGEPFTHEELLTLLALARGGIESIVATQKAALAN</sequence>
<keyword id="KW-0548">Nucleotidyltransferase</keyword>
<keyword id="KW-1185">Reference proteome</keyword>
<keyword id="KW-0694">RNA-binding</keyword>
<keyword id="KW-0698">rRNA processing</keyword>
<keyword id="KW-0808">Transferase</keyword>
<keyword id="KW-0819">tRNA processing</keyword>
<keyword id="KW-0820">tRNA-binding</keyword>
<accession>Q3YW05</accession>